<protein>
    <recommendedName>
        <fullName evidence="1">Phosphoadenosine 5'-phosphosulfate reductase</fullName>
        <shortName evidence="1">PAPS reductase</shortName>
        <ecNumber evidence="1">1.8.4.8</ecNumber>
    </recommendedName>
    <alternativeName>
        <fullName evidence="1">3'-phosphoadenylylsulfate reductase</fullName>
    </alternativeName>
    <alternativeName>
        <fullName evidence="1">PAPS reductase, thioredoxin dependent</fullName>
    </alternativeName>
    <alternativeName>
        <fullName evidence="1">PAPS sulfotransferase</fullName>
    </alternativeName>
    <alternativeName>
        <fullName evidence="1">PAdoPS reductase</fullName>
    </alternativeName>
</protein>
<organism>
    <name type="scientific">Vibrio atlanticus (strain LGP32)</name>
    <name type="common">Vibrio splendidus (strain Mel32)</name>
    <dbReference type="NCBI Taxonomy" id="575788"/>
    <lineage>
        <taxon>Bacteria</taxon>
        <taxon>Pseudomonadati</taxon>
        <taxon>Pseudomonadota</taxon>
        <taxon>Gammaproteobacteria</taxon>
        <taxon>Vibrionales</taxon>
        <taxon>Vibrionaceae</taxon>
        <taxon>Vibrio</taxon>
    </lineage>
</organism>
<proteinExistence type="inferred from homology"/>
<evidence type="ECO:0000255" key="1">
    <source>
        <dbReference type="HAMAP-Rule" id="MF_00063"/>
    </source>
</evidence>
<dbReference type="EC" id="1.8.4.8" evidence="1"/>
<dbReference type="EMBL" id="FM954972">
    <property type="protein sequence ID" value="CAV17323.1"/>
    <property type="molecule type" value="Genomic_DNA"/>
</dbReference>
<dbReference type="SMR" id="B7VI86"/>
<dbReference type="STRING" id="575788.VS_0301"/>
<dbReference type="KEGG" id="vsp:VS_0301"/>
<dbReference type="PATRIC" id="fig|575788.5.peg.1680"/>
<dbReference type="eggNOG" id="COG0175">
    <property type="taxonomic scope" value="Bacteria"/>
</dbReference>
<dbReference type="HOGENOM" id="CLU_044089_3_0_6"/>
<dbReference type="UniPathway" id="UPA00140">
    <property type="reaction ID" value="UER00206"/>
</dbReference>
<dbReference type="Proteomes" id="UP000009100">
    <property type="component" value="Chromosome 1"/>
</dbReference>
<dbReference type="GO" id="GO:0005737">
    <property type="term" value="C:cytoplasm"/>
    <property type="evidence" value="ECO:0007669"/>
    <property type="project" value="UniProtKB-SubCell"/>
</dbReference>
<dbReference type="GO" id="GO:0004604">
    <property type="term" value="F:phosphoadenylyl-sulfate reductase (thioredoxin) activity"/>
    <property type="evidence" value="ECO:0007669"/>
    <property type="project" value="UniProtKB-UniRule"/>
</dbReference>
<dbReference type="GO" id="GO:0070814">
    <property type="term" value="P:hydrogen sulfide biosynthetic process"/>
    <property type="evidence" value="ECO:0007669"/>
    <property type="project" value="UniProtKB-UniRule"/>
</dbReference>
<dbReference type="GO" id="GO:0019379">
    <property type="term" value="P:sulfate assimilation, phosphoadenylyl sulfate reduction by phosphoadenylyl-sulfate reductase (thioredoxin)"/>
    <property type="evidence" value="ECO:0007669"/>
    <property type="project" value="UniProtKB-UniRule"/>
</dbReference>
<dbReference type="CDD" id="cd23945">
    <property type="entry name" value="PAPS_reductase"/>
    <property type="match status" value="1"/>
</dbReference>
<dbReference type="FunFam" id="3.40.50.620:FF:000043">
    <property type="entry name" value="Phosphoadenosine phosphosulfate reductase"/>
    <property type="match status" value="1"/>
</dbReference>
<dbReference type="Gene3D" id="3.40.50.620">
    <property type="entry name" value="HUPs"/>
    <property type="match status" value="1"/>
</dbReference>
<dbReference type="HAMAP" id="MF_00063">
    <property type="entry name" value="CysH"/>
    <property type="match status" value="1"/>
</dbReference>
<dbReference type="InterPro" id="IPR004511">
    <property type="entry name" value="PAPS/APS_Rdtase"/>
</dbReference>
<dbReference type="InterPro" id="IPR002500">
    <property type="entry name" value="PAPS_reduct_dom"/>
</dbReference>
<dbReference type="InterPro" id="IPR011800">
    <property type="entry name" value="PAPS_reductase_CysH"/>
</dbReference>
<dbReference type="InterPro" id="IPR014729">
    <property type="entry name" value="Rossmann-like_a/b/a_fold"/>
</dbReference>
<dbReference type="NCBIfam" id="TIGR00434">
    <property type="entry name" value="cysH"/>
    <property type="match status" value="1"/>
</dbReference>
<dbReference type="NCBIfam" id="TIGR02057">
    <property type="entry name" value="PAPS_reductase"/>
    <property type="match status" value="1"/>
</dbReference>
<dbReference type="NCBIfam" id="NF002537">
    <property type="entry name" value="PRK02090.1"/>
    <property type="match status" value="1"/>
</dbReference>
<dbReference type="PANTHER" id="PTHR46509">
    <property type="entry name" value="PHOSPHOADENOSINE PHOSPHOSULFATE REDUCTASE"/>
    <property type="match status" value="1"/>
</dbReference>
<dbReference type="PANTHER" id="PTHR46509:SF1">
    <property type="entry name" value="PHOSPHOADENOSINE PHOSPHOSULFATE REDUCTASE"/>
    <property type="match status" value="1"/>
</dbReference>
<dbReference type="Pfam" id="PF01507">
    <property type="entry name" value="PAPS_reduct"/>
    <property type="match status" value="1"/>
</dbReference>
<dbReference type="PIRSF" id="PIRSF000857">
    <property type="entry name" value="PAPS_reductase"/>
    <property type="match status" value="1"/>
</dbReference>
<dbReference type="SUPFAM" id="SSF52402">
    <property type="entry name" value="Adenine nucleotide alpha hydrolases-like"/>
    <property type="match status" value="1"/>
</dbReference>
<accession>B7VI86</accession>
<feature type="chain" id="PRO_1000117933" description="Phosphoadenosine 5'-phosphosulfate reductase">
    <location>
        <begin position="1"/>
        <end position="258"/>
    </location>
</feature>
<feature type="active site" description="Nucleophile; cysteine thiosulfonate intermediate" evidence="1">
    <location>
        <position position="244"/>
    </location>
</feature>
<comment type="function">
    <text evidence="1">Catalyzes the formation of sulfite from phosphoadenosine 5'-phosphosulfate (PAPS) using thioredoxin as an electron donor.</text>
</comment>
<comment type="catalytic activity">
    <reaction evidence="1">
        <text>[thioredoxin]-disulfide + sulfite + adenosine 3',5'-bisphosphate + 2 H(+) = [thioredoxin]-dithiol + 3'-phosphoadenylyl sulfate</text>
        <dbReference type="Rhea" id="RHEA:11724"/>
        <dbReference type="Rhea" id="RHEA-COMP:10698"/>
        <dbReference type="Rhea" id="RHEA-COMP:10700"/>
        <dbReference type="ChEBI" id="CHEBI:15378"/>
        <dbReference type="ChEBI" id="CHEBI:17359"/>
        <dbReference type="ChEBI" id="CHEBI:29950"/>
        <dbReference type="ChEBI" id="CHEBI:50058"/>
        <dbReference type="ChEBI" id="CHEBI:58339"/>
        <dbReference type="ChEBI" id="CHEBI:58343"/>
        <dbReference type="EC" id="1.8.4.8"/>
    </reaction>
</comment>
<comment type="pathway">
    <text evidence="1">Sulfur metabolism; hydrogen sulfide biosynthesis; sulfite from sulfate: step 3/3.</text>
</comment>
<comment type="subcellular location">
    <subcellularLocation>
        <location evidence="1">Cytoplasm</location>
    </subcellularLocation>
</comment>
<comment type="similarity">
    <text evidence="1">Belongs to the PAPS reductase family. CysH subfamily.</text>
</comment>
<sequence length="258" mass="29522">MHNSVASKLKLAELLALTKTEQILRLGQINAELEQLTALERVKWALENLEGTHVVSSSFGIQAALMLHLVTQAKSDIPVILTDTGYLFPETYRFIDELSQKLTLNLQVFRAQQSSNWQEAQYGKLWDQGIEGIEKYNKLNKVEPMRRALDELEAGTWFSGLRREQSQSRANLPILSIQNGVFKFLPVIDWTNKDVHYYLEEHGLSYHPLREQGYLSVGDTHTTKKWEPGMTEEETRFNGLKRECGLHEDDGEQYGSGI</sequence>
<gene>
    <name evidence="1" type="primary">cysH</name>
    <name type="ordered locus">VS_0301</name>
</gene>
<keyword id="KW-0963">Cytoplasm</keyword>
<keyword id="KW-0560">Oxidoreductase</keyword>
<reference key="1">
    <citation type="submission" date="2009-02" db="EMBL/GenBank/DDBJ databases">
        <title>Vibrio splendidus str. LGP32 complete genome.</title>
        <authorList>
            <person name="Mazel D."/>
            <person name="Le Roux F."/>
        </authorList>
    </citation>
    <scope>NUCLEOTIDE SEQUENCE [LARGE SCALE GENOMIC DNA]</scope>
    <source>
        <strain>LGP32</strain>
    </source>
</reference>
<name>CYSH_VIBA3</name>